<name>FGF8_MOUSE</name>
<proteinExistence type="evidence at protein level"/>
<dbReference type="EMBL" id="D12483">
    <property type="protein sequence ID" value="BAA02051.1"/>
    <property type="molecule type" value="mRNA"/>
</dbReference>
<dbReference type="EMBL" id="D12482">
    <property type="protein sequence ID" value="BAA02050.1"/>
    <property type="molecule type" value="mRNA"/>
</dbReference>
<dbReference type="EMBL" id="U18673">
    <property type="protein sequence ID" value="AAA65387.1"/>
    <property type="molecule type" value="mRNA"/>
</dbReference>
<dbReference type="EMBL" id="Z48746">
    <property type="protein sequence ID" value="CAA88637.1"/>
    <property type="molecule type" value="mRNA"/>
</dbReference>
<dbReference type="CCDS" id="CCDS29864.1">
    <molecule id="P37237-1"/>
</dbReference>
<dbReference type="CCDS" id="CCDS50450.1">
    <molecule id="P37237-3"/>
</dbReference>
<dbReference type="CCDS" id="CCDS50451.1">
    <molecule id="P37237-2"/>
</dbReference>
<dbReference type="PIR" id="A46245">
    <property type="entry name" value="A46245"/>
</dbReference>
<dbReference type="PIR" id="B46245">
    <property type="entry name" value="B46245"/>
</dbReference>
<dbReference type="RefSeq" id="NP_001159834.1">
    <molecule id="P37237-2"/>
    <property type="nucleotide sequence ID" value="NM_001166362.2"/>
</dbReference>
<dbReference type="RefSeq" id="NP_001159835.1">
    <molecule id="P37237-3"/>
    <property type="nucleotide sequence ID" value="NM_001166363.2"/>
</dbReference>
<dbReference type="RefSeq" id="NP_034335.1">
    <molecule id="P37237-1"/>
    <property type="nucleotide sequence ID" value="NM_010205.3"/>
</dbReference>
<dbReference type="SMR" id="P37237"/>
<dbReference type="DIP" id="DIP-6030N"/>
<dbReference type="FunCoup" id="P37237">
    <property type="interactions" value="874"/>
</dbReference>
<dbReference type="IntAct" id="P37237">
    <property type="interactions" value="1"/>
</dbReference>
<dbReference type="STRING" id="10090.ENSMUSP00000026241"/>
<dbReference type="GlyCosmos" id="P37237">
    <property type="glycosylation" value="2 sites, No reported glycans"/>
</dbReference>
<dbReference type="GlyGen" id="P37237">
    <property type="glycosylation" value="2 sites"/>
</dbReference>
<dbReference type="PhosphoSitePlus" id="P37237"/>
<dbReference type="PaxDb" id="10090-ENSMUSP00000026241"/>
<dbReference type="Antibodypedia" id="31323">
    <property type="antibodies" value="411 antibodies from 35 providers"/>
</dbReference>
<dbReference type="DNASU" id="14179"/>
<dbReference type="Ensembl" id="ENSMUST00000026241.12">
    <molecule id="P37237-1"/>
    <property type="protein sequence ID" value="ENSMUSP00000026241.6"/>
    <property type="gene ID" value="ENSMUSG00000025219.14"/>
</dbReference>
<dbReference type="Ensembl" id="ENSMUST00000111927.8">
    <molecule id="P37237-3"/>
    <property type="protein sequence ID" value="ENSMUSP00000107558.2"/>
    <property type="gene ID" value="ENSMUSG00000025219.14"/>
</dbReference>
<dbReference type="Ensembl" id="ENSMUST00000111928.8">
    <molecule id="P37237-2"/>
    <property type="protein sequence ID" value="ENSMUSP00000107559.2"/>
    <property type="gene ID" value="ENSMUSG00000025219.14"/>
</dbReference>
<dbReference type="GeneID" id="14179"/>
<dbReference type="KEGG" id="mmu:14179"/>
<dbReference type="UCSC" id="uc008hrh.2">
    <molecule id="P37237-3"/>
    <property type="organism name" value="mouse"/>
</dbReference>
<dbReference type="UCSC" id="uc012bmo.1">
    <molecule id="P37237-1"/>
    <property type="organism name" value="mouse"/>
</dbReference>
<dbReference type="AGR" id="MGI:99604"/>
<dbReference type="CTD" id="2253"/>
<dbReference type="MGI" id="MGI:99604">
    <property type="gene designation" value="Fgf8"/>
</dbReference>
<dbReference type="VEuPathDB" id="HostDB:ENSMUSG00000025219"/>
<dbReference type="eggNOG" id="KOG3885">
    <property type="taxonomic scope" value="Eukaryota"/>
</dbReference>
<dbReference type="GeneTree" id="ENSGT00940000159518"/>
<dbReference type="HOGENOM" id="CLU_090682_0_1_1"/>
<dbReference type="InParanoid" id="P37237"/>
<dbReference type="OrthoDB" id="5988014at2759"/>
<dbReference type="PhylomeDB" id="P37237"/>
<dbReference type="TreeFam" id="TF331233"/>
<dbReference type="Reactome" id="R-MMU-109704">
    <property type="pathway name" value="PI3K Cascade"/>
</dbReference>
<dbReference type="Reactome" id="R-MMU-1257604">
    <property type="pathway name" value="PIP3 activates AKT signaling"/>
</dbReference>
<dbReference type="Reactome" id="R-MMU-190322">
    <property type="pathway name" value="FGFR4 ligand binding and activation"/>
</dbReference>
<dbReference type="Reactome" id="R-MMU-190371">
    <property type="pathway name" value="FGFR3b ligand binding and activation"/>
</dbReference>
<dbReference type="Reactome" id="R-MMU-190372">
    <property type="pathway name" value="FGFR3c ligand binding and activation"/>
</dbReference>
<dbReference type="Reactome" id="R-MMU-190373">
    <property type="pathway name" value="FGFR1c ligand binding and activation"/>
</dbReference>
<dbReference type="Reactome" id="R-MMU-190375">
    <property type="pathway name" value="FGFR2c ligand binding and activation"/>
</dbReference>
<dbReference type="Reactome" id="R-MMU-5654219">
    <property type="pathway name" value="Phospholipase C-mediated cascade: FGFR1"/>
</dbReference>
<dbReference type="Reactome" id="R-MMU-5654221">
    <property type="pathway name" value="Phospholipase C-mediated cascade, FGFR2"/>
</dbReference>
<dbReference type="Reactome" id="R-MMU-5654227">
    <property type="pathway name" value="Phospholipase C-mediated cascade, FGFR3"/>
</dbReference>
<dbReference type="Reactome" id="R-MMU-5654228">
    <property type="pathway name" value="Phospholipase C-mediated cascade, FGFR4"/>
</dbReference>
<dbReference type="Reactome" id="R-MMU-5654687">
    <property type="pathway name" value="Downstream signaling of activated FGFR1"/>
</dbReference>
<dbReference type="Reactome" id="R-MMU-5654688">
    <property type="pathway name" value="SHC-mediated cascade:FGFR1"/>
</dbReference>
<dbReference type="Reactome" id="R-MMU-5654689">
    <property type="pathway name" value="PI-3K cascade:FGFR1"/>
</dbReference>
<dbReference type="Reactome" id="R-MMU-5654693">
    <property type="pathway name" value="FRS-mediated FGFR1 signaling"/>
</dbReference>
<dbReference type="Reactome" id="R-MMU-5654695">
    <property type="pathway name" value="PI-3K cascade:FGFR2"/>
</dbReference>
<dbReference type="Reactome" id="R-MMU-5654699">
    <property type="pathway name" value="SHC-mediated cascade:FGFR2"/>
</dbReference>
<dbReference type="Reactome" id="R-MMU-5654700">
    <property type="pathway name" value="FRS-mediated FGFR2 signaling"/>
</dbReference>
<dbReference type="Reactome" id="R-MMU-5654704">
    <property type="pathway name" value="SHC-mediated cascade:FGFR3"/>
</dbReference>
<dbReference type="Reactome" id="R-MMU-5654706">
    <property type="pathway name" value="FRS-mediated FGFR3 signaling"/>
</dbReference>
<dbReference type="Reactome" id="R-MMU-5654710">
    <property type="pathway name" value="PI-3K cascade:FGFR3"/>
</dbReference>
<dbReference type="Reactome" id="R-MMU-5654712">
    <property type="pathway name" value="FRS-mediated FGFR4 signaling"/>
</dbReference>
<dbReference type="Reactome" id="R-MMU-5654719">
    <property type="pathway name" value="SHC-mediated cascade:FGFR4"/>
</dbReference>
<dbReference type="Reactome" id="R-MMU-5654720">
    <property type="pathway name" value="PI-3K cascade:FGFR4"/>
</dbReference>
<dbReference type="Reactome" id="R-MMU-5654726">
    <property type="pathway name" value="Negative regulation of FGFR1 signaling"/>
</dbReference>
<dbReference type="Reactome" id="R-MMU-5654727">
    <property type="pathway name" value="Negative regulation of FGFR2 signaling"/>
</dbReference>
<dbReference type="Reactome" id="R-MMU-5654732">
    <property type="pathway name" value="Negative regulation of FGFR3 signaling"/>
</dbReference>
<dbReference type="Reactome" id="R-MMU-5654733">
    <property type="pathway name" value="Negative regulation of FGFR4 signaling"/>
</dbReference>
<dbReference type="Reactome" id="R-MMU-5658623">
    <property type="pathway name" value="FGFRL1 modulation of FGFR1 signaling"/>
</dbReference>
<dbReference type="Reactome" id="R-MMU-5673001">
    <property type="pathway name" value="RAF/MAP kinase cascade"/>
</dbReference>
<dbReference type="Reactome" id="R-MMU-6811558">
    <property type="pathway name" value="PI5P, PP2A and IER3 Regulate PI3K/AKT Signaling"/>
</dbReference>
<dbReference type="BioGRID-ORCS" id="14179">
    <property type="hits" value="1 hit in 80 CRISPR screens"/>
</dbReference>
<dbReference type="ChiTaRS" id="Fgf8">
    <property type="organism name" value="mouse"/>
</dbReference>
<dbReference type="PRO" id="PR:P37237"/>
<dbReference type="Proteomes" id="UP000000589">
    <property type="component" value="Chromosome 19"/>
</dbReference>
<dbReference type="RNAct" id="P37237">
    <property type="molecule type" value="protein"/>
</dbReference>
<dbReference type="Bgee" id="ENSMUSG00000025219">
    <property type="expression patterns" value="Expressed in external ectoderm and 188 other cell types or tissues"/>
</dbReference>
<dbReference type="ExpressionAtlas" id="P37237">
    <property type="expression patterns" value="baseline and differential"/>
</dbReference>
<dbReference type="GO" id="GO:0009897">
    <property type="term" value="C:external side of plasma membrane"/>
    <property type="evidence" value="ECO:0007669"/>
    <property type="project" value="Ensembl"/>
</dbReference>
<dbReference type="GO" id="GO:0005576">
    <property type="term" value="C:extracellular region"/>
    <property type="evidence" value="ECO:0007669"/>
    <property type="project" value="UniProtKB-SubCell"/>
</dbReference>
<dbReference type="GO" id="GO:0042056">
    <property type="term" value="F:chemoattractant activity"/>
    <property type="evidence" value="ECO:0007669"/>
    <property type="project" value="Ensembl"/>
</dbReference>
<dbReference type="GO" id="GO:0008083">
    <property type="term" value="F:growth factor activity"/>
    <property type="evidence" value="ECO:0007669"/>
    <property type="project" value="UniProtKB-KW"/>
</dbReference>
<dbReference type="GO" id="GO:0035909">
    <property type="term" value="P:aorta morphogenesis"/>
    <property type="evidence" value="ECO:0000316"/>
    <property type="project" value="MGI"/>
</dbReference>
<dbReference type="GO" id="GO:0006915">
    <property type="term" value="P:apoptotic process"/>
    <property type="evidence" value="ECO:0000315"/>
    <property type="project" value="MGI"/>
</dbReference>
<dbReference type="GO" id="GO:0001974">
    <property type="term" value="P:blood vessel remodeling"/>
    <property type="evidence" value="ECO:0000316"/>
    <property type="project" value="MGI"/>
</dbReference>
<dbReference type="GO" id="GO:0060348">
    <property type="term" value="P:bone development"/>
    <property type="evidence" value="ECO:0007669"/>
    <property type="project" value="Ensembl"/>
</dbReference>
<dbReference type="GO" id="GO:0001569">
    <property type="term" value="P:branching involved in blood vessel morphogenesis"/>
    <property type="evidence" value="ECO:0000316"/>
    <property type="project" value="MGI"/>
</dbReference>
<dbReference type="GO" id="GO:0060445">
    <property type="term" value="P:branching involved in salivary gland morphogenesis"/>
    <property type="evidence" value="ECO:0000315"/>
    <property type="project" value="MGI"/>
</dbReference>
<dbReference type="GO" id="GO:0001658">
    <property type="term" value="P:branching involved in ureteric bud morphogenesis"/>
    <property type="evidence" value="ECO:0000315"/>
    <property type="project" value="MGI"/>
</dbReference>
<dbReference type="GO" id="GO:0045165">
    <property type="term" value="P:cell fate commitment"/>
    <property type="evidence" value="ECO:0000316"/>
    <property type="project" value="MGI"/>
</dbReference>
<dbReference type="GO" id="GO:0090134">
    <property type="term" value="P:cell migration involved in mesendoderm migration"/>
    <property type="evidence" value="ECO:0000315"/>
    <property type="project" value="MGI"/>
</dbReference>
<dbReference type="GO" id="GO:0008283">
    <property type="term" value="P:cell population proliferation"/>
    <property type="evidence" value="ECO:0000315"/>
    <property type="project" value="MGI"/>
</dbReference>
<dbReference type="GO" id="GO:0021846">
    <property type="term" value="P:cell proliferation in forebrain"/>
    <property type="evidence" value="ECO:0000315"/>
    <property type="project" value="MGI"/>
</dbReference>
<dbReference type="GO" id="GO:0060128">
    <property type="term" value="P:corticotropin hormone secreting cell differentiation"/>
    <property type="evidence" value="ECO:0000314"/>
    <property type="project" value="MGI"/>
</dbReference>
<dbReference type="GO" id="GO:0007368">
    <property type="term" value="P:determination of left/right symmetry"/>
    <property type="evidence" value="ECO:0000315"/>
    <property type="project" value="MGI"/>
</dbReference>
<dbReference type="GO" id="GO:0071542">
    <property type="term" value="P:dopaminergic neuron differentiation"/>
    <property type="evidence" value="ECO:0000304"/>
    <property type="project" value="ParkinsonsUK-UCL"/>
</dbReference>
<dbReference type="GO" id="GO:0033563">
    <property type="term" value="P:dorsal/ventral axon guidance"/>
    <property type="evidence" value="ECO:0007669"/>
    <property type="project" value="Ensembl"/>
</dbReference>
<dbReference type="GO" id="GO:0009792">
    <property type="term" value="P:embryo development ending in birth or egg hatching"/>
    <property type="evidence" value="ECO:0000315"/>
    <property type="project" value="MGI"/>
</dbReference>
<dbReference type="GO" id="GO:0035050">
    <property type="term" value="P:embryonic heart tube development"/>
    <property type="evidence" value="ECO:0000315"/>
    <property type="project" value="MGI"/>
</dbReference>
<dbReference type="GO" id="GO:0035116">
    <property type="term" value="P:embryonic hindlimb morphogenesis"/>
    <property type="evidence" value="ECO:0000316"/>
    <property type="project" value="MGI"/>
</dbReference>
<dbReference type="GO" id="GO:0048702">
    <property type="term" value="P:embryonic neurocranium morphogenesis"/>
    <property type="evidence" value="ECO:0000316"/>
    <property type="project" value="MGI"/>
</dbReference>
<dbReference type="GO" id="GO:0003198">
    <property type="term" value="P:epithelial to mesenchymal transition involved in endocardial cushion formation"/>
    <property type="evidence" value="ECO:0000314"/>
    <property type="project" value="MGI"/>
</dbReference>
<dbReference type="GO" id="GO:0008543">
    <property type="term" value="P:fibroblast growth factor receptor signaling pathway"/>
    <property type="evidence" value="ECO:0000314"/>
    <property type="project" value="MGI"/>
</dbReference>
<dbReference type="GO" id="GO:0021798">
    <property type="term" value="P:forebrain dorsal/ventral pattern formation"/>
    <property type="evidence" value="ECO:0000315"/>
    <property type="project" value="MGI"/>
</dbReference>
<dbReference type="GO" id="GO:0048853">
    <property type="term" value="P:forebrain morphogenesis"/>
    <property type="evidence" value="ECO:0000315"/>
    <property type="project" value="MGI"/>
</dbReference>
<dbReference type="GO" id="GO:0021884">
    <property type="term" value="P:forebrain neuron development"/>
    <property type="evidence" value="ECO:0007669"/>
    <property type="project" value="Ensembl"/>
</dbReference>
<dbReference type="GO" id="GO:0048699">
    <property type="term" value="P:generation of neurons"/>
    <property type="evidence" value="ECO:0000315"/>
    <property type="project" value="MGI"/>
</dbReference>
<dbReference type="GO" id="GO:0008406">
    <property type="term" value="P:gonad development"/>
    <property type="evidence" value="ECO:0007669"/>
    <property type="project" value="Ensembl"/>
</dbReference>
<dbReference type="GO" id="GO:0007507">
    <property type="term" value="P:heart development"/>
    <property type="evidence" value="ECO:0000315"/>
    <property type="project" value="MGI"/>
</dbReference>
<dbReference type="GO" id="GO:0001947">
    <property type="term" value="P:heart looping"/>
    <property type="evidence" value="ECO:0000315"/>
    <property type="project" value="MGI"/>
</dbReference>
<dbReference type="GO" id="GO:0003007">
    <property type="term" value="P:heart morphogenesis"/>
    <property type="evidence" value="ECO:0000315"/>
    <property type="project" value="MGI"/>
</dbReference>
<dbReference type="GO" id="GO:0042472">
    <property type="term" value="P:inner ear morphogenesis"/>
    <property type="evidence" value="ECO:0000316"/>
    <property type="project" value="MGI"/>
</dbReference>
<dbReference type="GO" id="GO:0001822">
    <property type="term" value="P:kidney development"/>
    <property type="evidence" value="ECO:0000315"/>
    <property type="project" value="MGI"/>
</dbReference>
<dbReference type="GO" id="GO:0120223">
    <property type="term" value="P:larynx morphogenesis"/>
    <property type="evidence" value="ECO:0000316"/>
    <property type="project" value="MGI"/>
</dbReference>
<dbReference type="GO" id="GO:0035108">
    <property type="term" value="P:limb morphogenesis"/>
    <property type="evidence" value="ECO:0000316"/>
    <property type="project" value="MGI"/>
</dbReference>
<dbReference type="GO" id="GO:0030324">
    <property type="term" value="P:lung development"/>
    <property type="evidence" value="ECO:0000315"/>
    <property type="project" value="MGI"/>
</dbReference>
<dbReference type="GO" id="GO:0060425">
    <property type="term" value="P:lung morphogenesis"/>
    <property type="evidence" value="ECO:0000315"/>
    <property type="project" value="MGI"/>
</dbReference>
<dbReference type="GO" id="GO:0030539">
    <property type="term" value="P:male genitalia development"/>
    <property type="evidence" value="ECO:0000314"/>
    <property type="project" value="MGI"/>
</dbReference>
<dbReference type="GO" id="GO:0000165">
    <property type="term" value="P:MAPK cascade"/>
    <property type="evidence" value="ECO:0000315"/>
    <property type="project" value="MGI"/>
</dbReference>
<dbReference type="GO" id="GO:0008078">
    <property type="term" value="P:mesodermal cell migration"/>
    <property type="evidence" value="ECO:0000315"/>
    <property type="project" value="MGI"/>
</dbReference>
<dbReference type="GO" id="GO:0001656">
    <property type="term" value="P:metanephros development"/>
    <property type="evidence" value="ECO:0007669"/>
    <property type="project" value="Ensembl"/>
</dbReference>
<dbReference type="GO" id="GO:0030917">
    <property type="term" value="P:midbrain-hindbrain boundary development"/>
    <property type="evidence" value="ECO:0000315"/>
    <property type="project" value="MGI"/>
</dbReference>
<dbReference type="GO" id="GO:0140014">
    <property type="term" value="P:mitotic nuclear division"/>
    <property type="evidence" value="ECO:0000314"/>
    <property type="project" value="MGI"/>
</dbReference>
<dbReference type="GO" id="GO:0008045">
    <property type="term" value="P:motor neuron axon guidance"/>
    <property type="evidence" value="ECO:0007669"/>
    <property type="project" value="Ensembl"/>
</dbReference>
<dbReference type="GO" id="GO:0043066">
    <property type="term" value="P:negative regulation of apoptotic process"/>
    <property type="evidence" value="ECO:0000315"/>
    <property type="project" value="MGI"/>
</dbReference>
<dbReference type="GO" id="GO:0055026">
    <property type="term" value="P:negative regulation of cardiac muscle tissue development"/>
    <property type="evidence" value="ECO:0007669"/>
    <property type="project" value="Ensembl"/>
</dbReference>
<dbReference type="GO" id="GO:0043524">
    <property type="term" value="P:negative regulation of neuron apoptotic process"/>
    <property type="evidence" value="ECO:0000315"/>
    <property type="project" value="MGI"/>
</dbReference>
<dbReference type="GO" id="GO:0001839">
    <property type="term" value="P:neural plate morphogenesis"/>
    <property type="evidence" value="ECO:0000315"/>
    <property type="project" value="MGI"/>
</dbReference>
<dbReference type="GO" id="GO:0051402">
    <property type="term" value="P:neuron apoptotic process"/>
    <property type="evidence" value="ECO:0000315"/>
    <property type="project" value="MGI"/>
</dbReference>
<dbReference type="GO" id="GO:0042476">
    <property type="term" value="P:odontogenesis"/>
    <property type="evidence" value="ECO:0007669"/>
    <property type="project" value="Ensembl"/>
</dbReference>
<dbReference type="GO" id="GO:0035265">
    <property type="term" value="P:organ growth"/>
    <property type="evidence" value="ECO:0000315"/>
    <property type="project" value="MGI"/>
</dbReference>
<dbReference type="GO" id="GO:0001759">
    <property type="term" value="P:organ induction"/>
    <property type="evidence" value="ECO:0000316"/>
    <property type="project" value="MGI"/>
</dbReference>
<dbReference type="GO" id="GO:0030916">
    <property type="term" value="P:otic vesicle formation"/>
    <property type="evidence" value="ECO:0000316"/>
    <property type="project" value="MGI"/>
</dbReference>
<dbReference type="GO" id="GO:0003151">
    <property type="term" value="P:outflow tract morphogenesis"/>
    <property type="evidence" value="ECO:0000316"/>
    <property type="project" value="MGI"/>
</dbReference>
<dbReference type="GO" id="GO:0003148">
    <property type="term" value="P:outflow tract septum morphogenesis"/>
    <property type="evidence" value="ECO:0000316"/>
    <property type="project" value="UniProtKB"/>
</dbReference>
<dbReference type="GO" id="GO:0021543">
    <property type="term" value="P:pallium development"/>
    <property type="evidence" value="ECO:0000315"/>
    <property type="project" value="MGI"/>
</dbReference>
<dbReference type="GO" id="GO:0060037">
    <property type="term" value="P:pharyngeal system development"/>
    <property type="evidence" value="ECO:0000316"/>
    <property type="project" value="MGI"/>
</dbReference>
<dbReference type="GO" id="GO:0051781">
    <property type="term" value="P:positive regulation of cell division"/>
    <property type="evidence" value="ECO:0007669"/>
    <property type="project" value="UniProtKB-KW"/>
</dbReference>
<dbReference type="GO" id="GO:0008284">
    <property type="term" value="P:positive regulation of cell population proliferation"/>
    <property type="evidence" value="ECO:0000314"/>
    <property type="project" value="MGI"/>
</dbReference>
<dbReference type="GO" id="GO:0070374">
    <property type="term" value="P:positive regulation of ERK1 and ERK2 cascade"/>
    <property type="evidence" value="ECO:0000316"/>
    <property type="project" value="MGI"/>
</dbReference>
<dbReference type="GO" id="GO:0045745">
    <property type="term" value="P:positive regulation of G protein-coupled receptor signaling pathway"/>
    <property type="evidence" value="ECO:0000314"/>
    <property type="project" value="MGI"/>
</dbReference>
<dbReference type="GO" id="GO:0010628">
    <property type="term" value="P:positive regulation of gene expression"/>
    <property type="evidence" value="ECO:0000314"/>
    <property type="project" value="MGI"/>
</dbReference>
<dbReference type="GO" id="GO:0045840">
    <property type="term" value="P:positive regulation of mitotic nuclear division"/>
    <property type="evidence" value="ECO:0000314"/>
    <property type="project" value="MGI"/>
</dbReference>
<dbReference type="GO" id="GO:0046622">
    <property type="term" value="P:positive regulation of organ growth"/>
    <property type="evidence" value="ECO:0000315"/>
    <property type="project" value="MGI"/>
</dbReference>
<dbReference type="GO" id="GO:2000648">
    <property type="term" value="P:positive regulation of stem cell proliferation"/>
    <property type="evidence" value="ECO:0000316"/>
    <property type="project" value="MGI"/>
</dbReference>
<dbReference type="GO" id="GO:0042487">
    <property type="term" value="P:regulation of odontogenesis of dentin-containing tooth"/>
    <property type="evidence" value="ECO:0000316"/>
    <property type="project" value="MGI"/>
</dbReference>
<dbReference type="GO" id="GO:0006979">
    <property type="term" value="P:response to oxidative stress"/>
    <property type="evidence" value="ECO:0007669"/>
    <property type="project" value="Ensembl"/>
</dbReference>
<dbReference type="GO" id="GO:0009410">
    <property type="term" value="P:response to xenobiotic stimulus"/>
    <property type="evidence" value="ECO:0007669"/>
    <property type="project" value="Ensembl"/>
</dbReference>
<dbReference type="GO" id="GO:0023019">
    <property type="term" value="P:signal transduction involved in regulation of gene expression"/>
    <property type="evidence" value="ECO:0000314"/>
    <property type="project" value="MGI"/>
</dbReference>
<dbReference type="GO" id="GO:0072089">
    <property type="term" value="P:stem cell proliferation"/>
    <property type="evidence" value="ECO:0000316"/>
    <property type="project" value="MGI"/>
</dbReference>
<dbReference type="GO" id="GO:0021544">
    <property type="term" value="P:subpallium development"/>
    <property type="evidence" value="ECO:0000315"/>
    <property type="project" value="MGI"/>
</dbReference>
<dbReference type="GO" id="GO:0021537">
    <property type="term" value="P:telencephalon development"/>
    <property type="evidence" value="ECO:0000315"/>
    <property type="project" value="MGI"/>
</dbReference>
<dbReference type="GO" id="GO:0030878">
    <property type="term" value="P:thyroid gland development"/>
    <property type="evidence" value="ECO:0000315"/>
    <property type="project" value="MGI"/>
</dbReference>
<dbReference type="GO" id="GO:0060129">
    <property type="term" value="P:thyroid-stimulating hormone-secreting cell differentiation"/>
    <property type="evidence" value="ECO:0000314"/>
    <property type="project" value="MGI"/>
</dbReference>
<dbReference type="CDD" id="cd23322">
    <property type="entry name" value="beta-trefoil_FGF8"/>
    <property type="match status" value="1"/>
</dbReference>
<dbReference type="FunFam" id="2.80.10.50:FF:000007">
    <property type="entry name" value="Fibroblast growth factor"/>
    <property type="match status" value="1"/>
</dbReference>
<dbReference type="Gene3D" id="2.80.10.50">
    <property type="match status" value="1"/>
</dbReference>
<dbReference type="InterPro" id="IPR002209">
    <property type="entry name" value="Fibroblast_GF_fam"/>
</dbReference>
<dbReference type="InterPro" id="IPR008996">
    <property type="entry name" value="IL1/FGF"/>
</dbReference>
<dbReference type="PANTHER" id="PTHR11486">
    <property type="entry name" value="FIBROBLAST GROWTH FACTOR"/>
    <property type="match status" value="1"/>
</dbReference>
<dbReference type="Pfam" id="PF00167">
    <property type="entry name" value="FGF"/>
    <property type="match status" value="1"/>
</dbReference>
<dbReference type="PRINTS" id="PR00262">
    <property type="entry name" value="IL1HBGF"/>
</dbReference>
<dbReference type="SMART" id="SM00442">
    <property type="entry name" value="FGF"/>
    <property type="match status" value="1"/>
</dbReference>
<dbReference type="SUPFAM" id="SSF50353">
    <property type="entry name" value="Cytokine"/>
    <property type="match status" value="1"/>
</dbReference>
<dbReference type="PROSITE" id="PS00247">
    <property type="entry name" value="HBGF_FGF"/>
    <property type="match status" value="1"/>
</dbReference>
<reference key="1">
    <citation type="journal article" date="1992" name="Proc. Natl. Acad. Sci. U.S.A.">
        <title>Cloning and characterization of an androgen-induced growth factor essential for the androgen-dependent growth of mouse mammary carcinoma cells.</title>
        <authorList>
            <person name="Tanaka A."/>
            <person name="Miyamoto K."/>
            <person name="Minamino N."/>
            <person name="Takeda M."/>
            <person name="Sato B."/>
            <person name="Matsuo H."/>
            <person name="Matsumoto K."/>
        </authorList>
    </citation>
    <scope>NUCLEOTIDE SEQUENCE [MRNA]</scope>
    <scope>PARTIAL PROTEIN SEQUENCE</scope>
</reference>
<reference key="2">
    <citation type="journal article" date="1995" name="J. Virol.">
        <title>Fgf-8, activated by proviral insertion, cooperates with the Wnt-1 transgene in murine mammary tumorigenesis.</title>
        <authorList>
            <person name="Macarthur C.A."/>
            <person name="Shankar D.B."/>
            <person name="Shackleford G.M."/>
        </authorList>
    </citation>
    <scope>NUCLEOTIDE SEQUENCE [MRNA]</scope>
    <scope>FUNCTION</scope>
    <source>
        <tissue>Mammary carcinoma</tissue>
    </source>
</reference>
<reference key="3">
    <citation type="journal article" date="1995" name="Curr. Biol.">
        <title>A role for FGF-8 in the initiation and maintenance of vertebrate limb bud outgrowth.</title>
        <authorList>
            <person name="Mahmood R."/>
            <person name="Bresnick J."/>
            <person name="Hornbruch A."/>
            <person name="Mahony C."/>
            <person name="Morton N."/>
            <person name="Colquhoun K."/>
            <person name="Martin P."/>
            <person name="Lumsden A."/>
            <person name="Dickson C."/>
            <person name="Mason I."/>
        </authorList>
    </citation>
    <scope>NUCLEOTIDE SEQUENCE [MRNA]</scope>
</reference>
<protein>
    <recommendedName>
        <fullName>Fibroblast growth factor 8</fullName>
        <shortName>FGF-8</shortName>
    </recommendedName>
    <alternativeName>
        <fullName>Androgen-induced growth factor</fullName>
        <shortName>AIGF</shortName>
    </alternativeName>
    <alternativeName>
        <fullName>Heparin-binding growth factor 8</fullName>
        <shortName>HBGF-8</shortName>
    </alternativeName>
</protein>
<sequence length="268" mass="30420">MGSPRSALSCLLLHLLVLCLQAQVRSAAQKRGPGAGNPADTLGQGHEDRPFGQRSRAGKNFTNPAPNYPEEGSKEQRDSVLPKVTQRHVREQSLVTDQLSRRLIRTYQLYSRTSGKHVQVLANKRINAMAEDGDPFAKLIVETDTFGSRVRVRGAETGLYICMNKKGKLIAKSNGKGKDCVFTEIVLENNYTALQNAKYEGWYMAFTRKGRPRKGSKTRQHQREVHFMKRLPRGHHTTEQSLRFEFLNYPPFTRSLRGSQRTWAPEPR</sequence>
<accession>P37237</accession>
<keyword id="KW-0025">Alternative splicing</keyword>
<keyword id="KW-0217">Developmental protein</keyword>
<keyword id="KW-0221">Differentiation</keyword>
<keyword id="KW-0903">Direct protein sequencing</keyword>
<keyword id="KW-0325">Glycoprotein</keyword>
<keyword id="KW-0339">Growth factor</keyword>
<keyword id="KW-0497">Mitogen</keyword>
<keyword id="KW-0873">Pyrrolidone carboxylic acid</keyword>
<keyword id="KW-1185">Reference proteome</keyword>
<keyword id="KW-0964">Secreted</keyword>
<keyword id="KW-0732">Signal</keyword>
<gene>
    <name type="primary">Fgf8</name>
    <name type="synonym">Aigf</name>
</gene>
<comment type="function">
    <text evidence="2 5">Plays an important role in the regulation of embryonic development, cell proliferation, cell differentiation and cell migration. Required for normal brain, eye, ear and limb development during embryogenesis. Required for normal development of the gonadotropin-releasing hormone (GnRH) neuronal system. Plays a role in neurite outgrowth in hippocampal cells (By similarity). Cooperates with Wnt-1 in mouse mammary tumor virus-induced murine mammary tumorigenesis (PubMed:7884899).</text>
</comment>
<comment type="subunit">
    <text evidence="1">Monomer. Homodimer. Interacts with FGFR1, FGFR2, FGFR3 and FGFR4. Affinity between fibroblast growth factors (FGFs) and their receptors is increased by heparan sulfate glycosaminoglycans that function as coreceptors (By similarity).</text>
</comment>
<comment type="subcellular location">
    <subcellularLocation>
        <location>Secreted</location>
    </subcellularLocation>
</comment>
<comment type="alternative products">
    <event type="alternative splicing"/>
    <isoform>
        <id>P37237-1</id>
        <name>FGF-8C</name>
        <sequence type="displayed"/>
    </isoform>
    <isoform>
        <id>P37237-2</id>
        <name>FGF-8B</name>
        <sequence type="described" ref="VSP_001527"/>
    </isoform>
    <isoform>
        <id>P37237-3</id>
        <name>FGF-8A</name>
        <sequence type="described" ref="VSP_001528"/>
    </isoform>
    <text>Additional isoforms seem to exist.</text>
</comment>
<comment type="tissue specificity">
    <text>Absent in normal mammary glands and detected only in adult testis and ovary and in midgestational embryos.</text>
</comment>
<comment type="induction">
    <text>By androgens.</text>
</comment>
<comment type="PTM">
    <text>The N-terminus is blocked.</text>
</comment>
<comment type="similarity">
    <text evidence="6">Belongs to the heparin-binding growth factors family.</text>
</comment>
<evidence type="ECO:0000250" key="1"/>
<evidence type="ECO:0000250" key="2">
    <source>
        <dbReference type="UniProtKB" id="P55075"/>
    </source>
</evidence>
<evidence type="ECO:0000255" key="3"/>
<evidence type="ECO:0000256" key="4">
    <source>
        <dbReference type="SAM" id="MobiDB-lite"/>
    </source>
</evidence>
<evidence type="ECO:0000269" key="5">
    <source>
    </source>
</evidence>
<evidence type="ECO:0000305" key="6"/>
<organism>
    <name type="scientific">Mus musculus</name>
    <name type="common">Mouse</name>
    <dbReference type="NCBI Taxonomy" id="10090"/>
    <lineage>
        <taxon>Eukaryota</taxon>
        <taxon>Metazoa</taxon>
        <taxon>Chordata</taxon>
        <taxon>Craniata</taxon>
        <taxon>Vertebrata</taxon>
        <taxon>Euteleostomi</taxon>
        <taxon>Mammalia</taxon>
        <taxon>Eutheria</taxon>
        <taxon>Euarchontoglires</taxon>
        <taxon>Glires</taxon>
        <taxon>Rodentia</taxon>
        <taxon>Myomorpha</taxon>
        <taxon>Muroidea</taxon>
        <taxon>Muridae</taxon>
        <taxon>Murinae</taxon>
        <taxon>Mus</taxon>
        <taxon>Mus</taxon>
    </lineage>
</organism>
<feature type="signal peptide" evidence="3">
    <location>
        <begin position="1"/>
        <end position="22"/>
    </location>
</feature>
<feature type="chain" id="PRO_0000008971" description="Fibroblast growth factor 8">
    <location>
        <begin position="23"/>
        <end position="268"/>
    </location>
</feature>
<feature type="region of interest" description="Disordered" evidence="4">
    <location>
        <begin position="29"/>
        <end position="87"/>
    </location>
</feature>
<feature type="compositionally biased region" description="Basic and acidic residues" evidence="4">
    <location>
        <begin position="71"/>
        <end position="80"/>
    </location>
</feature>
<feature type="modified residue" description="Pyrrolidone carboxylic acid" evidence="3">
    <location>
        <position position="23"/>
    </location>
</feature>
<feature type="glycosylation site" description="N-linked (GlcNAc...) asparagine" evidence="3">
    <location>
        <position position="60"/>
    </location>
</feature>
<feature type="glycosylation site" description="N-linked (GlcNAc...) asparagine" evidence="3">
    <location>
        <position position="190"/>
    </location>
</feature>
<feature type="splice variant" id="VSP_001528" description="In isoform FGF-8A." evidence="6">
    <location>
        <begin position="24"/>
        <end position="87"/>
    </location>
</feature>
<feature type="splice variant" id="VSP_001527" description="In isoform FGF-8B." evidence="6">
    <original>VRSAAQKRGPGAGNPADTLGQGHEDRPFGQRSRAGKNFTNPAPNYPEEGSKEQRDSVLPKVTQR</original>
    <variation>VTVQSSPNFTQ</variation>
    <location>
        <begin position="24"/>
        <end position="87"/>
    </location>
</feature>